<accession>O18500</accession>
<comment type="function">
    <text>Actins are highly conserved proteins that are involved in various types of cell motility and are ubiquitously expressed in all eukaryotic cells.</text>
</comment>
<comment type="catalytic activity">
    <reaction evidence="2">
        <text>ATP + H2O = ADP + phosphate + H(+)</text>
        <dbReference type="Rhea" id="RHEA:13065"/>
        <dbReference type="ChEBI" id="CHEBI:15377"/>
        <dbReference type="ChEBI" id="CHEBI:15378"/>
        <dbReference type="ChEBI" id="CHEBI:30616"/>
        <dbReference type="ChEBI" id="CHEBI:43474"/>
        <dbReference type="ChEBI" id="CHEBI:456216"/>
    </reaction>
</comment>
<comment type="subcellular location">
    <subcellularLocation>
        <location>Cytoplasm</location>
        <location>Cytoskeleton</location>
    </subcellularLocation>
</comment>
<comment type="similarity">
    <text evidence="3">Belongs to the actin family.</text>
</comment>
<dbReference type="EC" id="3.6.4.-" evidence="2"/>
<dbReference type="EMBL" id="Y13665">
    <property type="protein sequence ID" value="CAA74016.1"/>
    <property type="molecule type" value="mRNA"/>
</dbReference>
<dbReference type="RefSeq" id="NP_001158423.1">
    <property type="nucleotide sequence ID" value="NM_001164951.1"/>
</dbReference>
<dbReference type="SMR" id="O18500"/>
<dbReference type="EnsemblMetazoa" id="NM_001164951.1">
    <property type="protein sequence ID" value="NP_001158423.1"/>
    <property type="gene ID" value="GeneID_100303601"/>
</dbReference>
<dbReference type="GeneID" id="100303601"/>
<dbReference type="KEGG" id="sko:100303601"/>
<dbReference type="CTD" id="109789"/>
<dbReference type="OrthoDB" id="9973372at2759"/>
<dbReference type="Proteomes" id="UP000694865">
    <property type="component" value="Unplaced"/>
</dbReference>
<dbReference type="GO" id="GO:0005737">
    <property type="term" value="C:cytoplasm"/>
    <property type="evidence" value="ECO:0007669"/>
    <property type="project" value="UniProtKB-KW"/>
</dbReference>
<dbReference type="GO" id="GO:0005856">
    <property type="term" value="C:cytoskeleton"/>
    <property type="evidence" value="ECO:0007669"/>
    <property type="project" value="UniProtKB-SubCell"/>
</dbReference>
<dbReference type="GO" id="GO:0005524">
    <property type="term" value="F:ATP binding"/>
    <property type="evidence" value="ECO:0007669"/>
    <property type="project" value="UniProtKB-KW"/>
</dbReference>
<dbReference type="GO" id="GO:0016787">
    <property type="term" value="F:hydrolase activity"/>
    <property type="evidence" value="ECO:0007669"/>
    <property type="project" value="UniProtKB-KW"/>
</dbReference>
<dbReference type="CDD" id="cd10224">
    <property type="entry name" value="ASKHA_NBD_actin"/>
    <property type="match status" value="1"/>
</dbReference>
<dbReference type="FunFam" id="2.30.36.70:FF:000001">
    <property type="entry name" value="Actin, alpha skeletal muscle"/>
    <property type="match status" value="1"/>
</dbReference>
<dbReference type="FunFam" id="3.30.420.40:FF:000131">
    <property type="entry name" value="Actin, alpha skeletal muscle"/>
    <property type="match status" value="1"/>
</dbReference>
<dbReference type="FunFam" id="3.30.420.40:FF:000291">
    <property type="entry name" value="Actin, alpha skeletal muscle"/>
    <property type="match status" value="1"/>
</dbReference>
<dbReference type="FunFam" id="3.90.640.10:FF:000047">
    <property type="entry name" value="Actin, alpha skeletal muscle"/>
    <property type="match status" value="1"/>
</dbReference>
<dbReference type="FunFam" id="3.30.420.40:FF:000058">
    <property type="entry name" value="Putative actin-related protein 5"/>
    <property type="match status" value="1"/>
</dbReference>
<dbReference type="Gene3D" id="3.30.420.40">
    <property type="match status" value="2"/>
</dbReference>
<dbReference type="Gene3D" id="3.90.640.10">
    <property type="entry name" value="Actin, Chain A, domain 4"/>
    <property type="match status" value="1"/>
</dbReference>
<dbReference type="InterPro" id="IPR004000">
    <property type="entry name" value="Actin"/>
</dbReference>
<dbReference type="InterPro" id="IPR020902">
    <property type="entry name" value="Actin/actin-like_CS"/>
</dbReference>
<dbReference type="InterPro" id="IPR004001">
    <property type="entry name" value="Actin_CS"/>
</dbReference>
<dbReference type="InterPro" id="IPR043129">
    <property type="entry name" value="ATPase_NBD"/>
</dbReference>
<dbReference type="PANTHER" id="PTHR11937">
    <property type="entry name" value="ACTIN"/>
    <property type="match status" value="1"/>
</dbReference>
<dbReference type="Pfam" id="PF00022">
    <property type="entry name" value="Actin"/>
    <property type="match status" value="1"/>
</dbReference>
<dbReference type="PRINTS" id="PR00190">
    <property type="entry name" value="ACTIN"/>
</dbReference>
<dbReference type="SMART" id="SM00268">
    <property type="entry name" value="ACTIN"/>
    <property type="match status" value="1"/>
</dbReference>
<dbReference type="SUPFAM" id="SSF53067">
    <property type="entry name" value="Actin-like ATPase domain"/>
    <property type="match status" value="2"/>
</dbReference>
<dbReference type="PROSITE" id="PS00406">
    <property type="entry name" value="ACTINS_1"/>
    <property type="match status" value="1"/>
</dbReference>
<dbReference type="PROSITE" id="PS00432">
    <property type="entry name" value="ACTINS_2"/>
    <property type="match status" value="1"/>
</dbReference>
<dbReference type="PROSITE" id="PS01132">
    <property type="entry name" value="ACTINS_ACT_LIKE"/>
    <property type="match status" value="1"/>
</dbReference>
<name>ACT2_SACKO</name>
<reference key="1">
    <citation type="journal article" date="1997" name="J. Mol. Evol.">
        <title>Deuterostomic actin genes and the definition of the chordates: cDNA cloning and gene organization for cephalochordates and hemichordates.</title>
        <authorList>
            <person name="Bovenschulte M."/>
            <person name="Weber K."/>
        </authorList>
    </citation>
    <scope>NUCLEOTIDE SEQUENCE [MRNA]</scope>
</reference>
<feature type="propeptide" id="PRO_0000000716" description="Removed in mature form" evidence="1">
    <location>
        <begin position="1"/>
        <end position="2"/>
    </location>
</feature>
<feature type="chain" id="PRO_0000000717" description="Actin-2">
    <location>
        <begin position="3"/>
        <end position="376"/>
    </location>
</feature>
<feature type="modified residue" description="N-acetylaspartate" evidence="1">
    <location>
        <position position="3"/>
    </location>
</feature>
<evidence type="ECO:0000250" key="1"/>
<evidence type="ECO:0000250" key="2">
    <source>
        <dbReference type="UniProtKB" id="P68137"/>
    </source>
</evidence>
<evidence type="ECO:0000305" key="3"/>
<protein>
    <recommendedName>
        <fullName>Actin-2</fullName>
        <ecNumber evidence="2">3.6.4.-</ecNumber>
    </recommendedName>
</protein>
<keyword id="KW-0007">Acetylation</keyword>
<keyword id="KW-0067">ATP-binding</keyword>
<keyword id="KW-0963">Cytoplasm</keyword>
<keyword id="KW-0206">Cytoskeleton</keyword>
<keyword id="KW-0378">Hydrolase</keyword>
<keyword id="KW-0547">Nucleotide-binding</keyword>
<proteinExistence type="evidence at transcript level"/>
<sequence>MCDEEVAALVVDNGSGMCKAGFAGDDAPRAVFPSIVGRPRHQGVMVGMGQKDSYVGDEAQSKRGILTLKYPIEHGIVTNWDDMEKIWHHTFYNELRVAPEEHPVLLTEAPLNPKANREKMTQIMFETFNTPAMYVAIQAVLSLYASGRTTGIVMDTGDGVTHTVPIYEGYALPHAILRLDLAGRDLTDYLMKILTERGYSFTTTAEREIVRDIKEKLCYVALDFEQEMATAASSSSLEKSYELPDGQVITIGNERFRCPEALFQPAFLGMESPGIHETTYNSIMKCDIDIRKDLYAFSVLSGGTSMYPGIADRMQKEITSLAPSSMKIKIIAPPERKYSVWIGGSILASLSTFQQMWISKQEYDESGPSIVHRKCF</sequence>
<organism>
    <name type="scientific">Saccoglossus kowalevskii</name>
    <name type="common">Acorn worm</name>
    <dbReference type="NCBI Taxonomy" id="10224"/>
    <lineage>
        <taxon>Eukaryota</taxon>
        <taxon>Metazoa</taxon>
        <taxon>Hemichordata</taxon>
        <taxon>Enteropneusta</taxon>
        <taxon>Harrimaniidae</taxon>
        <taxon>Saccoglossus</taxon>
    </lineage>
</organism>